<proteinExistence type="evidence at protein level"/>
<feature type="initiator methionine" description="Removed" evidence="1">
    <location>
        <position position="1"/>
    </location>
</feature>
<feature type="chain" id="PRO_0000160657" description="Alcohol dehydrogenase S chain">
    <location>
        <begin position="2"/>
        <end position="374"/>
    </location>
</feature>
<feature type="binding site">
    <location>
        <position position="47"/>
    </location>
    <ligand>
        <name>Zn(2+)</name>
        <dbReference type="ChEBI" id="CHEBI:29105"/>
        <label>1</label>
        <note>catalytic</note>
    </ligand>
</feature>
<feature type="binding site">
    <location>
        <position position="68"/>
    </location>
    <ligand>
        <name>Zn(2+)</name>
        <dbReference type="ChEBI" id="CHEBI:29105"/>
        <label>1</label>
        <note>catalytic</note>
    </ligand>
</feature>
<feature type="binding site">
    <location>
        <position position="98"/>
    </location>
    <ligand>
        <name>Zn(2+)</name>
        <dbReference type="ChEBI" id="CHEBI:29105"/>
        <label>2</label>
    </ligand>
</feature>
<feature type="binding site">
    <location>
        <position position="101"/>
    </location>
    <ligand>
        <name>Zn(2+)</name>
        <dbReference type="ChEBI" id="CHEBI:29105"/>
        <label>2</label>
    </ligand>
</feature>
<feature type="binding site">
    <location>
        <position position="104"/>
    </location>
    <ligand>
        <name>Zn(2+)</name>
        <dbReference type="ChEBI" id="CHEBI:29105"/>
        <label>2</label>
    </ligand>
</feature>
<feature type="binding site">
    <location>
        <position position="112"/>
    </location>
    <ligand>
        <name>Zn(2+)</name>
        <dbReference type="ChEBI" id="CHEBI:29105"/>
        <label>2</label>
    </ligand>
</feature>
<feature type="binding site">
    <location>
        <position position="174"/>
    </location>
    <ligand>
        <name>Zn(2+)</name>
        <dbReference type="ChEBI" id="CHEBI:29105"/>
        <label>1</label>
        <note>catalytic</note>
    </ligand>
</feature>
<feature type="binding site">
    <location>
        <begin position="199"/>
        <end position="204"/>
    </location>
    <ligand>
        <name>NAD(+)</name>
        <dbReference type="ChEBI" id="CHEBI:57540"/>
    </ligand>
</feature>
<feature type="binding site">
    <location>
        <position position="223"/>
    </location>
    <ligand>
        <name>NAD(+)</name>
        <dbReference type="ChEBI" id="CHEBI:57540"/>
    </ligand>
</feature>
<feature type="binding site">
    <location>
        <position position="228"/>
    </location>
    <ligand>
        <name>NAD(+)</name>
        <dbReference type="ChEBI" id="CHEBI:57540"/>
    </ligand>
</feature>
<feature type="binding site">
    <location>
        <begin position="292"/>
        <end position="294"/>
    </location>
    <ligand>
        <name>NAD(+)</name>
        <dbReference type="ChEBI" id="CHEBI:57540"/>
    </ligand>
</feature>
<feature type="binding site">
    <location>
        <position position="369"/>
    </location>
    <ligand>
        <name>NAD(+)</name>
        <dbReference type="ChEBI" id="CHEBI:57540"/>
    </ligand>
</feature>
<feature type="modified residue" description="N-acetylserine" evidence="1">
    <location>
        <position position="2"/>
    </location>
</feature>
<feature type="sequence conflict" description="In Ref. 2; AA sequence." evidence="2" ref="2">
    <original>A</original>
    <variation>T</variation>
    <location>
        <position position="44"/>
    </location>
</feature>
<feature type="sequence conflict" description="In Ref. 2; AA sequence." evidence="2" ref="2">
    <original>A</original>
    <variation>T</variation>
    <location>
        <position position="60"/>
    </location>
</feature>
<feature type="sequence conflict" description="In Ref. 2; AA sequence." evidence="2" ref="2">
    <original>L</original>
    <variation>SL</variation>
    <location>
        <position position="116"/>
    </location>
</feature>
<feature type="sequence conflict" description="In Ref. 2; AA sequence." evidence="2" ref="2">
    <original>V</original>
    <variation>I</variation>
    <location>
        <position position="172"/>
    </location>
</feature>
<feature type="sequence conflict" description="In Ref. 2; AA sequence." evidence="2" ref="2">
    <original>A</original>
    <variation>T</variation>
    <location>
        <position position="277"/>
    </location>
</feature>
<feature type="strand" evidence="3">
    <location>
        <begin position="8"/>
        <end position="15"/>
    </location>
</feature>
<feature type="strand" evidence="3">
    <location>
        <begin position="23"/>
        <end position="29"/>
    </location>
</feature>
<feature type="strand" evidence="3">
    <location>
        <begin position="36"/>
        <end position="45"/>
    </location>
</feature>
<feature type="helix" evidence="3">
    <location>
        <begin position="48"/>
        <end position="55"/>
    </location>
</feature>
<feature type="strand" evidence="3">
    <location>
        <begin position="56"/>
        <end position="58"/>
    </location>
</feature>
<feature type="strand" evidence="3">
    <location>
        <begin position="62"/>
        <end position="65"/>
    </location>
</feature>
<feature type="strand" evidence="3">
    <location>
        <begin position="69"/>
        <end position="77"/>
    </location>
</feature>
<feature type="strand" evidence="3">
    <location>
        <begin position="89"/>
        <end position="92"/>
    </location>
</feature>
<feature type="strand" evidence="3">
    <location>
        <begin position="99"/>
        <end position="101"/>
    </location>
</feature>
<feature type="helix" evidence="3">
    <location>
        <begin position="102"/>
        <end position="105"/>
    </location>
</feature>
<feature type="strand" evidence="3">
    <location>
        <begin position="106"/>
        <end position="108"/>
    </location>
</feature>
<feature type="strand" evidence="3">
    <location>
        <begin position="129"/>
        <end position="132"/>
    </location>
</feature>
<feature type="strand" evidence="3">
    <location>
        <begin position="135"/>
        <end position="138"/>
    </location>
</feature>
<feature type="turn" evidence="3">
    <location>
        <begin position="141"/>
        <end position="143"/>
    </location>
</feature>
<feature type="strand" evidence="3">
    <location>
        <begin position="146"/>
        <end position="153"/>
    </location>
</feature>
<feature type="helix" evidence="3">
    <location>
        <begin position="154"/>
        <end position="156"/>
    </location>
</feature>
<feature type="strand" evidence="3">
    <location>
        <begin position="157"/>
        <end position="159"/>
    </location>
</feature>
<feature type="helix" evidence="3">
    <location>
        <begin position="166"/>
        <end position="169"/>
    </location>
</feature>
<feature type="helix" evidence="3">
    <location>
        <begin position="170"/>
        <end position="173"/>
    </location>
</feature>
<feature type="helix" evidence="3">
    <location>
        <begin position="175"/>
        <end position="184"/>
    </location>
</feature>
<feature type="turn" evidence="3">
    <location>
        <begin position="185"/>
        <end position="187"/>
    </location>
</feature>
<feature type="strand" evidence="3">
    <location>
        <begin position="194"/>
        <end position="198"/>
    </location>
</feature>
<feature type="helix" evidence="3">
    <location>
        <begin position="202"/>
        <end position="213"/>
    </location>
</feature>
<feature type="strand" evidence="3">
    <location>
        <begin position="217"/>
        <end position="222"/>
    </location>
</feature>
<feature type="helix" evidence="3">
    <location>
        <begin position="226"/>
        <end position="228"/>
    </location>
</feature>
<feature type="helix" evidence="3">
    <location>
        <begin position="229"/>
        <end position="234"/>
    </location>
</feature>
<feature type="strand" evidence="3">
    <location>
        <begin position="238"/>
        <end position="241"/>
    </location>
</feature>
<feature type="helix" evidence="3">
    <location>
        <begin position="243"/>
        <end position="245"/>
    </location>
</feature>
<feature type="helix" evidence="3">
    <location>
        <begin position="250"/>
        <end position="257"/>
    </location>
</feature>
<feature type="strand" evidence="3">
    <location>
        <begin position="262"/>
        <end position="267"/>
    </location>
</feature>
<feature type="helix" evidence="3">
    <location>
        <begin position="272"/>
        <end position="281"/>
    </location>
</feature>
<feature type="turn" evidence="3">
    <location>
        <begin position="284"/>
        <end position="286"/>
    </location>
</feature>
<feature type="strand" evidence="3">
    <location>
        <begin position="288"/>
        <end position="291"/>
    </location>
</feature>
<feature type="strand" evidence="3">
    <location>
        <begin position="301"/>
        <end position="303"/>
    </location>
</feature>
<feature type="helix" evidence="3">
    <location>
        <begin position="306"/>
        <end position="309"/>
    </location>
</feature>
<feature type="strand" evidence="3">
    <location>
        <begin position="313"/>
        <end position="316"/>
    </location>
</feature>
<feature type="helix" evidence="3">
    <location>
        <begin position="319"/>
        <end position="321"/>
    </location>
</feature>
<feature type="helix" evidence="3">
    <location>
        <begin position="324"/>
        <end position="336"/>
    </location>
</feature>
<feature type="helix" evidence="3">
    <location>
        <begin position="343"/>
        <end position="345"/>
    </location>
</feature>
<feature type="strand" evidence="3">
    <location>
        <begin position="346"/>
        <end position="351"/>
    </location>
</feature>
<feature type="helix" evidence="3">
    <location>
        <begin position="352"/>
        <end position="354"/>
    </location>
</feature>
<feature type="helix" evidence="3">
    <location>
        <begin position="355"/>
        <end position="363"/>
    </location>
</feature>
<feature type="strand" evidence="3">
    <location>
        <begin position="368"/>
        <end position="373"/>
    </location>
</feature>
<keyword id="KW-0002">3D-structure</keyword>
<keyword id="KW-0007">Acetylation</keyword>
<keyword id="KW-0963">Cytoplasm</keyword>
<keyword id="KW-0903">Direct protein sequencing</keyword>
<keyword id="KW-0479">Metal-binding</keyword>
<keyword id="KW-0520">NAD</keyword>
<keyword id="KW-0560">Oxidoreductase</keyword>
<keyword id="KW-1185">Reference proteome</keyword>
<keyword id="KW-0862">Zinc</keyword>
<reference key="1">
    <citation type="journal article" date="1991" name="J. Biol. Chem.">
        <title>Isoenzymes of horse liver alcohol dehydrogenase active on ethanol and steroids. cDNA cloning, expression, and comparison of active sites.</title>
        <authorList>
            <person name="Park D.H."/>
            <person name="Plapp B.V."/>
        </authorList>
    </citation>
    <scope>NUCLEOTIDE SEQUENCE [MRNA]</scope>
    <source>
        <tissue>Liver</tissue>
    </source>
</reference>
<reference key="2">
    <citation type="journal article" date="1970" name="Eur. J. Biochem.">
        <title>Horse liver alcohol dehydrogenase. On the primary structures of the isoenzymes.</title>
        <authorList>
            <person name="Joernvall H."/>
        </authorList>
    </citation>
    <scope>PROTEIN SEQUENCE OF 2-374</scope>
    <scope>ACETYLATION AT SER-2</scope>
    <source>
        <tissue>Liver</tissue>
    </source>
</reference>
<reference key="3">
    <citation type="journal article" date="1976" name="J. Mol. Biol.">
        <title>Three-dimensional structure of horse liver alcohol dehydrogenase at 2.4-A resolution.</title>
        <authorList>
            <person name="Eklund H."/>
            <person name="Nordstroem B."/>
            <person name="Zeppezauer E."/>
            <person name="Soederlund G."/>
            <person name="Ohlsson I."/>
            <person name="Boiwe T."/>
            <person name="Soederberg B.-O."/>
            <person name="Tapia O."/>
            <person name="Braenden C.-I."/>
            <person name="Aakeson A."/>
        </authorList>
    </citation>
    <scope>X-RAY CRYSTALLOGRAPHY (2.4 ANGSTROMS)</scope>
</reference>
<reference key="4">
    <citation type="journal article" date="1984" name="Biochemistry">
        <title>Crystallographic investigations of nicotinamide adenine dinucleotide binding to horse liver alcohol dehydrogenase.</title>
        <authorList>
            <person name="Eklund H."/>
            <person name="Samama J.-P."/>
            <person name="Jones T.A."/>
        </authorList>
    </citation>
    <scope>X-RAY CRYSTALLOGRAPHY (2.9 ANGSTROMS)</scope>
</reference>
<comment type="catalytic activity">
    <reaction>
        <text>a primary alcohol + NAD(+) = an aldehyde + NADH + H(+)</text>
        <dbReference type="Rhea" id="RHEA:10736"/>
        <dbReference type="ChEBI" id="CHEBI:15378"/>
        <dbReference type="ChEBI" id="CHEBI:15734"/>
        <dbReference type="ChEBI" id="CHEBI:17478"/>
        <dbReference type="ChEBI" id="CHEBI:57540"/>
        <dbReference type="ChEBI" id="CHEBI:57945"/>
        <dbReference type="EC" id="1.1.1.1"/>
    </reaction>
</comment>
<comment type="catalytic activity">
    <reaction>
        <text>a secondary alcohol + NAD(+) = a ketone + NADH + H(+)</text>
        <dbReference type="Rhea" id="RHEA:10740"/>
        <dbReference type="ChEBI" id="CHEBI:15378"/>
        <dbReference type="ChEBI" id="CHEBI:17087"/>
        <dbReference type="ChEBI" id="CHEBI:35681"/>
        <dbReference type="ChEBI" id="CHEBI:57540"/>
        <dbReference type="ChEBI" id="CHEBI:57945"/>
        <dbReference type="EC" id="1.1.1.1"/>
    </reaction>
</comment>
<comment type="cofactor">
    <cofactor>
        <name>Zn(2+)</name>
        <dbReference type="ChEBI" id="CHEBI:29105"/>
    </cofactor>
    <text>Binds 2 Zn(2+) ions per subunit.</text>
</comment>
<comment type="subunit">
    <text>Dimer of identical or non-identical chains of two types (E and S) coded by 2 separate genes at different loci.</text>
</comment>
<comment type="subcellular location">
    <subcellularLocation>
        <location>Cytoplasm</location>
    </subcellularLocation>
</comment>
<comment type="similarity">
    <text evidence="2">Belongs to the zinc-containing alcohol dehydrogenase family. Class-I subfamily.</text>
</comment>
<evidence type="ECO:0000269" key="1">
    <source>
    </source>
</evidence>
<evidence type="ECO:0000305" key="2"/>
<evidence type="ECO:0007829" key="3">
    <source>
        <dbReference type="PDB" id="1EE2"/>
    </source>
</evidence>
<accession>P00328</accession>
<sequence length="374" mass="39623">MSTAGKVIKCKAAVLWEQKKPFSIEEVEVAPPKAHEVRIKMVAAGICRSDDHVVSGTLVAPLPVIAGHEAAGIVESIGEGVTTVRPGDKVIPLFIPQCGKCSVCKHPEGNLCLKNLSMPRGTMQDGTSRFTCRGKPIHHFLGTSTFSQYTVVDEISVAKIDAASPLEKVCLVGCGFSTGYGSAVKVAKVTQGSTCAVFGLGGVGLSVIMGCKAAGAARIIGVDINKDKFAKAKEVGATECVNPQDYKKPIQEVLTEMSNGGVDFSFEVIGRLDTMVAALSCCQEAYGVSVIVGVPPDSQNLSMNPMLLLSGRTWKGAIFGGFKSKDSVPKLVADFMAKKFALDPLITHVLPFEKINEGFDLLRSGKSIRTILTF</sequence>
<organism>
    <name type="scientific">Equus caballus</name>
    <name type="common">Horse</name>
    <dbReference type="NCBI Taxonomy" id="9796"/>
    <lineage>
        <taxon>Eukaryota</taxon>
        <taxon>Metazoa</taxon>
        <taxon>Chordata</taxon>
        <taxon>Craniata</taxon>
        <taxon>Vertebrata</taxon>
        <taxon>Euteleostomi</taxon>
        <taxon>Mammalia</taxon>
        <taxon>Eutheria</taxon>
        <taxon>Laurasiatheria</taxon>
        <taxon>Perissodactyla</taxon>
        <taxon>Equidae</taxon>
        <taxon>Equus</taxon>
    </lineage>
</organism>
<dbReference type="EC" id="1.1.1.1"/>
<dbReference type="EMBL" id="M64865">
    <property type="protein sequence ID" value="AAA30932.1"/>
    <property type="molecule type" value="mRNA"/>
</dbReference>
<dbReference type="PIR" id="B39872">
    <property type="entry name" value="DEHOAS"/>
</dbReference>
<dbReference type="RefSeq" id="NP_001075414.1">
    <property type="nucleotide sequence ID" value="NM_001081945.2"/>
</dbReference>
<dbReference type="PDB" id="1EE2">
    <property type="method" value="X-ray"/>
    <property type="resolution" value="1.54 A"/>
    <property type="chains" value="A/B=2-374"/>
</dbReference>
<dbReference type="PDBsum" id="1EE2"/>
<dbReference type="SMR" id="P00328"/>
<dbReference type="STRING" id="9796.ENSECAP00000032068"/>
<dbReference type="BindingDB" id="P00328"/>
<dbReference type="ChEMBL" id="CHEMBL2111372"/>
<dbReference type="DrugCentral" id="P00328"/>
<dbReference type="iPTMnet" id="P00328"/>
<dbReference type="PaxDb" id="9796-ENSECAP00000032068"/>
<dbReference type="PeptideAtlas" id="P00328"/>
<dbReference type="GeneID" id="100034175"/>
<dbReference type="KEGG" id="ecb:100034175"/>
<dbReference type="InParanoid" id="P00328"/>
<dbReference type="OrthoDB" id="417550at2759"/>
<dbReference type="SABIO-RK" id="P00328"/>
<dbReference type="EvolutionaryTrace" id="P00328"/>
<dbReference type="PRO" id="PR:P00328"/>
<dbReference type="Proteomes" id="UP000002281">
    <property type="component" value="Unplaced"/>
</dbReference>
<dbReference type="GO" id="GO:0005829">
    <property type="term" value="C:cytosol"/>
    <property type="evidence" value="ECO:0000318"/>
    <property type="project" value="GO_Central"/>
</dbReference>
<dbReference type="GO" id="GO:0004745">
    <property type="term" value="F:all-trans-retinol dehydrogenase (NAD+) activity"/>
    <property type="evidence" value="ECO:0000318"/>
    <property type="project" value="GO_Central"/>
</dbReference>
<dbReference type="GO" id="GO:0008270">
    <property type="term" value="F:zinc ion binding"/>
    <property type="evidence" value="ECO:0000318"/>
    <property type="project" value="GO_Central"/>
</dbReference>
<dbReference type="GO" id="GO:0042573">
    <property type="term" value="P:retinoic acid metabolic process"/>
    <property type="evidence" value="ECO:0000318"/>
    <property type="project" value="GO_Central"/>
</dbReference>
<dbReference type="GO" id="GO:0042572">
    <property type="term" value="P:retinol metabolic process"/>
    <property type="evidence" value="ECO:0000318"/>
    <property type="project" value="GO_Central"/>
</dbReference>
<dbReference type="CDD" id="cd08299">
    <property type="entry name" value="alcohol_DH_class_I_II_IV"/>
    <property type="match status" value="1"/>
</dbReference>
<dbReference type="FunFam" id="3.40.50.720:FF:000003">
    <property type="entry name" value="S-(hydroxymethyl)glutathione dehydrogenase"/>
    <property type="match status" value="1"/>
</dbReference>
<dbReference type="FunFam" id="3.90.180.10:FF:000001">
    <property type="entry name" value="S-(hydroxymethyl)glutathione dehydrogenase"/>
    <property type="match status" value="1"/>
</dbReference>
<dbReference type="Gene3D" id="3.90.180.10">
    <property type="entry name" value="Medium-chain alcohol dehydrogenases, catalytic domain"/>
    <property type="match status" value="1"/>
</dbReference>
<dbReference type="Gene3D" id="3.40.50.720">
    <property type="entry name" value="NAD(P)-binding Rossmann-like Domain"/>
    <property type="match status" value="1"/>
</dbReference>
<dbReference type="InterPro" id="IPR013149">
    <property type="entry name" value="ADH-like_C"/>
</dbReference>
<dbReference type="InterPro" id="IPR013154">
    <property type="entry name" value="ADH-like_N"/>
</dbReference>
<dbReference type="InterPro" id="IPR002328">
    <property type="entry name" value="ADH_Zn_CS"/>
</dbReference>
<dbReference type="InterPro" id="IPR011032">
    <property type="entry name" value="GroES-like_sf"/>
</dbReference>
<dbReference type="InterPro" id="IPR036291">
    <property type="entry name" value="NAD(P)-bd_dom_sf"/>
</dbReference>
<dbReference type="InterPro" id="IPR020843">
    <property type="entry name" value="PKS_ER"/>
</dbReference>
<dbReference type="PANTHER" id="PTHR43880">
    <property type="entry name" value="ALCOHOL DEHYDROGENASE"/>
    <property type="match status" value="1"/>
</dbReference>
<dbReference type="PANTHER" id="PTHR43880:SF1">
    <property type="entry name" value="ALCOHOL DEHYDROGENASE 1A"/>
    <property type="match status" value="1"/>
</dbReference>
<dbReference type="Pfam" id="PF08240">
    <property type="entry name" value="ADH_N"/>
    <property type="match status" value="1"/>
</dbReference>
<dbReference type="Pfam" id="PF00107">
    <property type="entry name" value="ADH_zinc_N"/>
    <property type="match status" value="1"/>
</dbReference>
<dbReference type="SMART" id="SM00829">
    <property type="entry name" value="PKS_ER"/>
    <property type="match status" value="1"/>
</dbReference>
<dbReference type="SUPFAM" id="SSF50129">
    <property type="entry name" value="GroES-like"/>
    <property type="match status" value="2"/>
</dbReference>
<dbReference type="SUPFAM" id="SSF51735">
    <property type="entry name" value="NAD(P)-binding Rossmann-fold domains"/>
    <property type="match status" value="1"/>
</dbReference>
<dbReference type="PROSITE" id="PS00059">
    <property type="entry name" value="ADH_ZINC"/>
    <property type="match status" value="1"/>
</dbReference>
<name>ADH1S_HORSE</name>
<protein>
    <recommendedName>
        <fullName>Alcohol dehydrogenase S chain</fullName>
        <ecNumber>1.1.1.1</ecNumber>
    </recommendedName>
</protein>